<dbReference type="EMBL" id="X06616">
    <property type="protein sequence ID" value="CAA29830.1"/>
    <property type="molecule type" value="Genomic_DNA"/>
</dbReference>
<dbReference type="PIR" id="S09659">
    <property type="entry name" value="S09659"/>
</dbReference>
<dbReference type="SMR" id="P17985"/>
<dbReference type="GO" id="GO:0003677">
    <property type="term" value="F:DNA binding"/>
    <property type="evidence" value="ECO:0007669"/>
    <property type="project" value="InterPro"/>
</dbReference>
<dbReference type="GO" id="GO:0004803">
    <property type="term" value="F:transposase activity"/>
    <property type="evidence" value="ECO:0007669"/>
    <property type="project" value="InterPro"/>
</dbReference>
<dbReference type="GO" id="GO:0006313">
    <property type="term" value="P:DNA transposition"/>
    <property type="evidence" value="ECO:0007669"/>
    <property type="project" value="InterPro"/>
</dbReference>
<dbReference type="InterPro" id="IPR009057">
    <property type="entry name" value="Homeodomain-like_sf"/>
</dbReference>
<dbReference type="InterPro" id="IPR002514">
    <property type="entry name" value="Transposase_8"/>
</dbReference>
<dbReference type="InterPro" id="IPR052546">
    <property type="entry name" value="Transposase_8_domain"/>
</dbReference>
<dbReference type="PANTHER" id="PTHR33609">
    <property type="entry name" value="LOW CALCIUM RESPONSE LOCUS PROTEIN S"/>
    <property type="match status" value="1"/>
</dbReference>
<dbReference type="PANTHER" id="PTHR33609:SF1">
    <property type="entry name" value="TRANSPOSASE"/>
    <property type="match status" value="1"/>
</dbReference>
<dbReference type="Pfam" id="PF01527">
    <property type="entry name" value="HTH_Tnp_1"/>
    <property type="match status" value="1"/>
</dbReference>
<dbReference type="SUPFAM" id="SSF46689">
    <property type="entry name" value="Homeodomain-like"/>
    <property type="match status" value="1"/>
</dbReference>
<sequence length="88" mass="10024">MKRSRFTEEQIIGILREQEAGVATAEVCRRHGVSSATFYKWKAKFGGLDVSEARRLKALEDENARLKRMLADAMLDNVALKDLLGKKW</sequence>
<name>YIA3_RHISP</name>
<organism>
    <name type="scientific">Rhizobium sp</name>
    <dbReference type="NCBI Taxonomy" id="391"/>
    <lineage>
        <taxon>Bacteria</taxon>
        <taxon>Pseudomonadati</taxon>
        <taxon>Pseudomonadota</taxon>
        <taxon>Alphaproteobacteria</taxon>
        <taxon>Hyphomicrobiales</taxon>
        <taxon>Rhizobiaceae</taxon>
        <taxon>Rhizobium/Agrobacterium group</taxon>
        <taxon>Rhizobium</taxon>
    </lineage>
</organism>
<proteinExistence type="inferred from homology"/>
<comment type="similarity">
    <text evidence="1">Belongs to the transposase 8 family.</text>
</comment>
<evidence type="ECO:0000305" key="1"/>
<accession>P17985</accession>
<keyword id="KW-0814">Transposable element</keyword>
<feature type="chain" id="PRO_0000075536" description="Insertion element ISR1 uncharacterized 10 kDa protein A3">
    <location>
        <begin position="1"/>
        <end position="88"/>
    </location>
</feature>
<reference key="1">
    <citation type="journal article" date="1989" name="Plasmid">
        <title>ISR1, a transposable DNA sequence resident in Rhizobium class IV strains, shows structural characteristics of classical insertion elements.</title>
        <authorList>
            <person name="Priefer U.B."/>
            <person name="Kalinowski J."/>
            <person name="Rueger B."/>
            <person name="Heumann W."/>
            <person name="Puehler A."/>
        </authorList>
    </citation>
    <scope>NUCLEOTIDE SEQUENCE [GENOMIC DNA]</scope>
    <source>
        <strain>Class IV strains</strain>
    </source>
</reference>
<protein>
    <recommendedName>
        <fullName>Insertion element ISR1 uncharacterized 10 kDa protein A3</fullName>
    </recommendedName>
</protein>